<evidence type="ECO:0000255" key="1">
    <source>
        <dbReference type="HAMAP-Rule" id="MF_00376"/>
    </source>
</evidence>
<organism>
    <name type="scientific">Photobacterium profundum (strain SS9)</name>
    <dbReference type="NCBI Taxonomy" id="298386"/>
    <lineage>
        <taxon>Bacteria</taxon>
        <taxon>Pseudomonadati</taxon>
        <taxon>Pseudomonadota</taxon>
        <taxon>Gammaproteobacteria</taxon>
        <taxon>Vibrionales</taxon>
        <taxon>Vibrionaceae</taxon>
        <taxon>Photobacterium</taxon>
    </lineage>
</organism>
<name>COAE_PHOPR</name>
<keyword id="KW-0067">ATP-binding</keyword>
<keyword id="KW-0173">Coenzyme A biosynthesis</keyword>
<keyword id="KW-0963">Cytoplasm</keyword>
<keyword id="KW-0418">Kinase</keyword>
<keyword id="KW-0547">Nucleotide-binding</keyword>
<keyword id="KW-1185">Reference proteome</keyword>
<keyword id="KW-0808">Transferase</keyword>
<dbReference type="EC" id="2.7.1.24" evidence="1"/>
<dbReference type="EMBL" id="CR378673">
    <property type="protein sequence ID" value="CAG21510.1"/>
    <property type="molecule type" value="Genomic_DNA"/>
</dbReference>
<dbReference type="RefSeq" id="WP_011219764.1">
    <property type="nucleotide sequence ID" value="NC_006370.1"/>
</dbReference>
<dbReference type="SMR" id="Q6LMG7"/>
<dbReference type="STRING" id="298386.PBPRA3204"/>
<dbReference type="KEGG" id="ppr:PBPRA3204"/>
<dbReference type="eggNOG" id="COG0237">
    <property type="taxonomic scope" value="Bacteria"/>
</dbReference>
<dbReference type="HOGENOM" id="CLU_057180_1_2_6"/>
<dbReference type="UniPathway" id="UPA00241">
    <property type="reaction ID" value="UER00356"/>
</dbReference>
<dbReference type="Proteomes" id="UP000000593">
    <property type="component" value="Chromosome 1"/>
</dbReference>
<dbReference type="GO" id="GO:0005737">
    <property type="term" value="C:cytoplasm"/>
    <property type="evidence" value="ECO:0007669"/>
    <property type="project" value="UniProtKB-SubCell"/>
</dbReference>
<dbReference type="GO" id="GO:0005524">
    <property type="term" value="F:ATP binding"/>
    <property type="evidence" value="ECO:0007669"/>
    <property type="project" value="UniProtKB-UniRule"/>
</dbReference>
<dbReference type="GO" id="GO:0004140">
    <property type="term" value="F:dephospho-CoA kinase activity"/>
    <property type="evidence" value="ECO:0007669"/>
    <property type="project" value="UniProtKB-UniRule"/>
</dbReference>
<dbReference type="GO" id="GO:0015937">
    <property type="term" value="P:coenzyme A biosynthetic process"/>
    <property type="evidence" value="ECO:0007669"/>
    <property type="project" value="UniProtKB-UniRule"/>
</dbReference>
<dbReference type="CDD" id="cd02022">
    <property type="entry name" value="DPCK"/>
    <property type="match status" value="1"/>
</dbReference>
<dbReference type="FunFam" id="3.40.50.300:FF:000518">
    <property type="entry name" value="Dephospho-CoA kinase"/>
    <property type="match status" value="1"/>
</dbReference>
<dbReference type="Gene3D" id="3.40.50.300">
    <property type="entry name" value="P-loop containing nucleotide triphosphate hydrolases"/>
    <property type="match status" value="1"/>
</dbReference>
<dbReference type="HAMAP" id="MF_00376">
    <property type="entry name" value="Dephospho_CoA_kinase"/>
    <property type="match status" value="1"/>
</dbReference>
<dbReference type="InterPro" id="IPR001977">
    <property type="entry name" value="Depp_CoAkinase"/>
</dbReference>
<dbReference type="InterPro" id="IPR027417">
    <property type="entry name" value="P-loop_NTPase"/>
</dbReference>
<dbReference type="NCBIfam" id="TIGR00152">
    <property type="entry name" value="dephospho-CoA kinase"/>
    <property type="match status" value="1"/>
</dbReference>
<dbReference type="PANTHER" id="PTHR10695:SF46">
    <property type="entry name" value="BIFUNCTIONAL COENZYME A SYNTHASE-RELATED"/>
    <property type="match status" value="1"/>
</dbReference>
<dbReference type="PANTHER" id="PTHR10695">
    <property type="entry name" value="DEPHOSPHO-COA KINASE-RELATED"/>
    <property type="match status" value="1"/>
</dbReference>
<dbReference type="Pfam" id="PF01121">
    <property type="entry name" value="CoaE"/>
    <property type="match status" value="1"/>
</dbReference>
<dbReference type="SUPFAM" id="SSF52540">
    <property type="entry name" value="P-loop containing nucleoside triphosphate hydrolases"/>
    <property type="match status" value="1"/>
</dbReference>
<dbReference type="PROSITE" id="PS51219">
    <property type="entry name" value="DPCK"/>
    <property type="match status" value="1"/>
</dbReference>
<proteinExistence type="inferred from homology"/>
<reference key="1">
    <citation type="journal article" date="2005" name="Science">
        <title>Life at depth: Photobacterium profundum genome sequence and expression analysis.</title>
        <authorList>
            <person name="Vezzi A."/>
            <person name="Campanaro S."/>
            <person name="D'Angelo M."/>
            <person name="Simonato F."/>
            <person name="Vitulo N."/>
            <person name="Lauro F.M."/>
            <person name="Cestaro A."/>
            <person name="Malacrida G."/>
            <person name="Simionati B."/>
            <person name="Cannata N."/>
            <person name="Romualdi C."/>
            <person name="Bartlett D.H."/>
            <person name="Valle G."/>
        </authorList>
    </citation>
    <scope>NUCLEOTIDE SEQUENCE [LARGE SCALE GENOMIC DNA]</scope>
    <source>
        <strain>ATCC BAA-1253 / SS9</strain>
    </source>
</reference>
<feature type="chain" id="PRO_0000172974" description="Dephospho-CoA kinase">
    <location>
        <begin position="1"/>
        <end position="200"/>
    </location>
</feature>
<feature type="domain" description="DPCK" evidence="1">
    <location>
        <begin position="4"/>
        <end position="200"/>
    </location>
</feature>
<feature type="binding site" evidence="1">
    <location>
        <begin position="12"/>
        <end position="17"/>
    </location>
    <ligand>
        <name>ATP</name>
        <dbReference type="ChEBI" id="CHEBI:30616"/>
    </ligand>
</feature>
<comment type="function">
    <text evidence="1">Catalyzes the phosphorylation of the 3'-hydroxyl group of dephosphocoenzyme A to form coenzyme A.</text>
</comment>
<comment type="catalytic activity">
    <reaction evidence="1">
        <text>3'-dephospho-CoA + ATP = ADP + CoA + H(+)</text>
        <dbReference type="Rhea" id="RHEA:18245"/>
        <dbReference type="ChEBI" id="CHEBI:15378"/>
        <dbReference type="ChEBI" id="CHEBI:30616"/>
        <dbReference type="ChEBI" id="CHEBI:57287"/>
        <dbReference type="ChEBI" id="CHEBI:57328"/>
        <dbReference type="ChEBI" id="CHEBI:456216"/>
        <dbReference type="EC" id="2.7.1.24"/>
    </reaction>
</comment>
<comment type="pathway">
    <text evidence="1">Cofactor biosynthesis; coenzyme A biosynthesis; CoA from (R)-pantothenate: step 5/5.</text>
</comment>
<comment type="subcellular location">
    <subcellularLocation>
        <location evidence="1">Cytoplasm</location>
    </subcellularLocation>
</comment>
<comment type="similarity">
    <text evidence="1">Belongs to the CoaE family.</text>
</comment>
<protein>
    <recommendedName>
        <fullName evidence="1">Dephospho-CoA kinase</fullName>
        <ecNumber evidence="1">2.7.1.24</ecNumber>
    </recommendedName>
    <alternativeName>
        <fullName evidence="1">Dephosphocoenzyme A kinase</fullName>
    </alternativeName>
</protein>
<sequence>MTMVIGLTGGIGSGKTTVANLFGDYGIDIIDADIIAREVVEPNTTGLNAIVDKLGADILLTDGTLDRSKLRNAIFNQQQLKDWLNGLLHPLIREKMLSNISKATSPYCLLVVPLMVENNLQTMTHRLLVVDVDESVQIDRTQARDNVAPEHVKKILMAQASRQNRNAAADDIISNNGNSAELKNKVAELHQKYIKMSHLY</sequence>
<accession>Q6LMG7</accession>
<gene>
    <name evidence="1" type="primary">coaE</name>
    <name type="ordered locus">PBPRA3204</name>
</gene>